<dbReference type="EMBL" id="CP000738">
    <property type="protein sequence ID" value="ABR59800.1"/>
    <property type="molecule type" value="Genomic_DNA"/>
</dbReference>
<dbReference type="RefSeq" id="WP_011975136.1">
    <property type="nucleotide sequence ID" value="NC_009636.1"/>
</dbReference>
<dbReference type="RefSeq" id="YP_001326635.1">
    <property type="nucleotide sequence ID" value="NC_009636.1"/>
</dbReference>
<dbReference type="SMR" id="A6U820"/>
<dbReference type="STRING" id="366394.Smed_0945"/>
<dbReference type="KEGG" id="smd:Smed_0945"/>
<dbReference type="PATRIC" id="fig|366394.8.peg.4061"/>
<dbReference type="eggNOG" id="COG3811">
    <property type="taxonomic scope" value="Bacteria"/>
</dbReference>
<dbReference type="HOGENOM" id="CLU_164736_0_0_5"/>
<dbReference type="OrthoDB" id="7204880at2"/>
<dbReference type="Proteomes" id="UP000001108">
    <property type="component" value="Chromosome"/>
</dbReference>
<dbReference type="HAMAP" id="MF_00827">
    <property type="entry name" value="UPF0386"/>
    <property type="match status" value="1"/>
</dbReference>
<dbReference type="InterPro" id="IPR018654">
    <property type="entry name" value="YjhX_toxin"/>
</dbReference>
<dbReference type="NCBIfam" id="NF010240">
    <property type="entry name" value="PRK13687.1"/>
    <property type="match status" value="1"/>
</dbReference>
<dbReference type="Pfam" id="PF09857">
    <property type="entry name" value="YjhX_toxin"/>
    <property type="match status" value="1"/>
</dbReference>
<evidence type="ECO:0000255" key="1">
    <source>
        <dbReference type="HAMAP-Rule" id="MF_00827"/>
    </source>
</evidence>
<reference key="1">
    <citation type="submission" date="2007-06" db="EMBL/GenBank/DDBJ databases">
        <title>Complete sequence of Sinorhizobium medicae WSM419 chromosome.</title>
        <authorList>
            <consortium name="US DOE Joint Genome Institute"/>
            <person name="Copeland A."/>
            <person name="Lucas S."/>
            <person name="Lapidus A."/>
            <person name="Barry K."/>
            <person name="Glavina del Rio T."/>
            <person name="Dalin E."/>
            <person name="Tice H."/>
            <person name="Pitluck S."/>
            <person name="Chain P."/>
            <person name="Malfatti S."/>
            <person name="Shin M."/>
            <person name="Vergez L."/>
            <person name="Schmutz J."/>
            <person name="Larimer F."/>
            <person name="Land M."/>
            <person name="Hauser L."/>
            <person name="Kyrpides N."/>
            <person name="Mikhailova N."/>
            <person name="Reeve W.G."/>
            <person name="Richardson P."/>
        </authorList>
    </citation>
    <scope>NUCLEOTIDE SEQUENCE [LARGE SCALE GENOMIC DNA]</scope>
    <source>
        <strain>WSM419</strain>
    </source>
</reference>
<feature type="chain" id="PRO_0000352173" description="UPF0386 protein Smed_0945">
    <location>
        <begin position="1"/>
        <end position="81"/>
    </location>
</feature>
<accession>A6U820</accession>
<organism>
    <name type="scientific">Sinorhizobium medicae (strain WSM419)</name>
    <name type="common">Ensifer medicae</name>
    <dbReference type="NCBI Taxonomy" id="366394"/>
    <lineage>
        <taxon>Bacteria</taxon>
        <taxon>Pseudomonadati</taxon>
        <taxon>Pseudomonadota</taxon>
        <taxon>Alphaproteobacteria</taxon>
        <taxon>Hyphomicrobiales</taxon>
        <taxon>Rhizobiaceae</taxon>
        <taxon>Sinorhizobium/Ensifer group</taxon>
        <taxon>Sinorhizobium</taxon>
    </lineage>
</organism>
<name>Y945_SINMW</name>
<comment type="similarity">
    <text evidence="1">Belongs to the UPF0386 family.</text>
</comment>
<protein>
    <recommendedName>
        <fullName evidence="1">UPF0386 protein Smed_0945</fullName>
    </recommendedName>
</protein>
<sequence length="81" mass="9508">MDISRAEQRILHHLAQGGRIEITREGKTITEIRCFTRDGWVYPGVDLELFRKLKRKRAIRSSAGKPYRITERGVRSELNNR</sequence>
<gene>
    <name type="ordered locus">Smed_0945</name>
</gene>
<proteinExistence type="inferred from homology"/>